<keyword id="KW-0963">Cytoplasm</keyword>
<keyword id="KW-0396">Initiation factor</keyword>
<keyword id="KW-0648">Protein biosynthesis</keyword>
<keyword id="KW-1185">Reference proteome</keyword>
<keyword id="KW-0694">RNA-binding</keyword>
<keyword id="KW-0699">rRNA-binding</keyword>
<accession>Q11QD4</accession>
<reference key="1">
    <citation type="journal article" date="2007" name="Appl. Environ. Microbiol.">
        <title>Genome sequence of the cellulolytic gliding bacterium Cytophaga hutchinsonii.</title>
        <authorList>
            <person name="Xie G."/>
            <person name="Bruce D.C."/>
            <person name="Challacombe J.F."/>
            <person name="Chertkov O."/>
            <person name="Detter J.C."/>
            <person name="Gilna P."/>
            <person name="Han C.S."/>
            <person name="Lucas S."/>
            <person name="Misra M."/>
            <person name="Myers G.L."/>
            <person name="Richardson P."/>
            <person name="Tapia R."/>
            <person name="Thayer N."/>
            <person name="Thompson L.S."/>
            <person name="Brettin T.S."/>
            <person name="Henrissat B."/>
            <person name="Wilson D.B."/>
            <person name="McBride M.J."/>
        </authorList>
    </citation>
    <scope>NUCLEOTIDE SEQUENCE [LARGE SCALE GENOMIC DNA]</scope>
    <source>
        <strain>ATCC 33406 / DSM 1761 / JCM 20678 / CIP 103989 / IAM 12607 / NBRC 15051 / NCIMB 9469 / D465</strain>
    </source>
</reference>
<name>IF1_CYTH3</name>
<proteinExistence type="inferred from homology"/>
<comment type="function">
    <text evidence="1">One of the essential components for the initiation of protein synthesis. Stabilizes the binding of IF-2 and IF-3 on the 30S subunit to which N-formylmethionyl-tRNA(fMet) subsequently binds. Helps modulate mRNA selection, yielding the 30S pre-initiation complex (PIC). Upon addition of the 50S ribosomal subunit IF-1, IF-2 and IF-3 are released leaving the mature 70S translation initiation complex.</text>
</comment>
<comment type="subunit">
    <text evidence="1">Component of the 30S ribosomal translation pre-initiation complex which assembles on the 30S ribosome in the order IF-2 and IF-3, IF-1 and N-formylmethionyl-tRNA(fMet); mRNA recruitment can occur at any time during PIC assembly.</text>
</comment>
<comment type="subcellular location">
    <subcellularLocation>
        <location evidence="1">Cytoplasm</location>
    </subcellularLocation>
</comment>
<comment type="similarity">
    <text evidence="1">Belongs to the IF-1 family.</text>
</comment>
<sequence length="72" mass="8288">MSKQSSIEQDGKILEALSNAMFRVELSNGHQVIAHISGKMRMNYIKILPGDKVRMEMSPYDLTKGRIVFRYK</sequence>
<gene>
    <name evidence="1" type="primary">infA</name>
    <name type="ordered locus">CHU_3140</name>
</gene>
<organism>
    <name type="scientific">Cytophaga hutchinsonii (strain ATCC 33406 / DSM 1761 / CIP 103989 / NBRC 15051 / NCIMB 9469 / D465)</name>
    <dbReference type="NCBI Taxonomy" id="269798"/>
    <lineage>
        <taxon>Bacteria</taxon>
        <taxon>Pseudomonadati</taxon>
        <taxon>Bacteroidota</taxon>
        <taxon>Cytophagia</taxon>
        <taxon>Cytophagales</taxon>
        <taxon>Cytophagaceae</taxon>
        <taxon>Cytophaga</taxon>
    </lineage>
</organism>
<feature type="chain" id="PRO_0000263790" description="Translation initiation factor IF-1">
    <location>
        <begin position="1"/>
        <end position="72"/>
    </location>
</feature>
<feature type="domain" description="S1-like" evidence="1">
    <location>
        <begin position="1"/>
        <end position="72"/>
    </location>
</feature>
<evidence type="ECO:0000255" key="1">
    <source>
        <dbReference type="HAMAP-Rule" id="MF_00075"/>
    </source>
</evidence>
<dbReference type="EMBL" id="CP000383">
    <property type="protein sequence ID" value="ABG60380.1"/>
    <property type="molecule type" value="Genomic_DNA"/>
</dbReference>
<dbReference type="RefSeq" id="WP_011586489.1">
    <property type="nucleotide sequence ID" value="NC_008255.1"/>
</dbReference>
<dbReference type="SMR" id="Q11QD4"/>
<dbReference type="STRING" id="269798.CHU_3140"/>
<dbReference type="KEGG" id="chu:CHU_3140"/>
<dbReference type="eggNOG" id="COG0361">
    <property type="taxonomic scope" value="Bacteria"/>
</dbReference>
<dbReference type="HOGENOM" id="CLU_151267_1_0_10"/>
<dbReference type="OrthoDB" id="9803250at2"/>
<dbReference type="Proteomes" id="UP000001822">
    <property type="component" value="Chromosome"/>
</dbReference>
<dbReference type="GO" id="GO:0005829">
    <property type="term" value="C:cytosol"/>
    <property type="evidence" value="ECO:0007669"/>
    <property type="project" value="TreeGrafter"/>
</dbReference>
<dbReference type="GO" id="GO:0043022">
    <property type="term" value="F:ribosome binding"/>
    <property type="evidence" value="ECO:0007669"/>
    <property type="project" value="UniProtKB-UniRule"/>
</dbReference>
<dbReference type="GO" id="GO:0019843">
    <property type="term" value="F:rRNA binding"/>
    <property type="evidence" value="ECO:0007669"/>
    <property type="project" value="UniProtKB-UniRule"/>
</dbReference>
<dbReference type="GO" id="GO:0003743">
    <property type="term" value="F:translation initiation factor activity"/>
    <property type="evidence" value="ECO:0007669"/>
    <property type="project" value="UniProtKB-UniRule"/>
</dbReference>
<dbReference type="CDD" id="cd04451">
    <property type="entry name" value="S1_IF1"/>
    <property type="match status" value="1"/>
</dbReference>
<dbReference type="FunFam" id="2.40.50.140:FF:000002">
    <property type="entry name" value="Translation initiation factor IF-1"/>
    <property type="match status" value="1"/>
</dbReference>
<dbReference type="Gene3D" id="2.40.50.140">
    <property type="entry name" value="Nucleic acid-binding proteins"/>
    <property type="match status" value="1"/>
</dbReference>
<dbReference type="HAMAP" id="MF_00075">
    <property type="entry name" value="IF_1"/>
    <property type="match status" value="1"/>
</dbReference>
<dbReference type="InterPro" id="IPR012340">
    <property type="entry name" value="NA-bd_OB-fold"/>
</dbReference>
<dbReference type="InterPro" id="IPR006196">
    <property type="entry name" value="RNA-binding_domain_S1_IF1"/>
</dbReference>
<dbReference type="InterPro" id="IPR003029">
    <property type="entry name" value="S1_domain"/>
</dbReference>
<dbReference type="InterPro" id="IPR004368">
    <property type="entry name" value="TIF_IF1"/>
</dbReference>
<dbReference type="NCBIfam" id="TIGR00008">
    <property type="entry name" value="infA"/>
    <property type="match status" value="1"/>
</dbReference>
<dbReference type="PANTHER" id="PTHR33370">
    <property type="entry name" value="TRANSLATION INITIATION FACTOR IF-1, CHLOROPLASTIC"/>
    <property type="match status" value="1"/>
</dbReference>
<dbReference type="PANTHER" id="PTHR33370:SF1">
    <property type="entry name" value="TRANSLATION INITIATION FACTOR IF-1, CHLOROPLASTIC"/>
    <property type="match status" value="1"/>
</dbReference>
<dbReference type="Pfam" id="PF01176">
    <property type="entry name" value="eIF-1a"/>
    <property type="match status" value="1"/>
</dbReference>
<dbReference type="SMART" id="SM00316">
    <property type="entry name" value="S1"/>
    <property type="match status" value="1"/>
</dbReference>
<dbReference type="SUPFAM" id="SSF50249">
    <property type="entry name" value="Nucleic acid-binding proteins"/>
    <property type="match status" value="1"/>
</dbReference>
<dbReference type="PROSITE" id="PS50832">
    <property type="entry name" value="S1_IF1_TYPE"/>
    <property type="match status" value="1"/>
</dbReference>
<protein>
    <recommendedName>
        <fullName evidence="1">Translation initiation factor IF-1</fullName>
    </recommendedName>
</protein>